<accession>Q3AAK3</accession>
<organism>
    <name type="scientific">Carboxydothermus hydrogenoformans (strain ATCC BAA-161 / DSM 6008 / Z-2901)</name>
    <dbReference type="NCBI Taxonomy" id="246194"/>
    <lineage>
        <taxon>Bacteria</taxon>
        <taxon>Bacillati</taxon>
        <taxon>Bacillota</taxon>
        <taxon>Clostridia</taxon>
        <taxon>Thermoanaerobacterales</taxon>
        <taxon>Thermoanaerobacteraceae</taxon>
        <taxon>Carboxydothermus</taxon>
    </lineage>
</organism>
<reference key="1">
    <citation type="journal article" date="2005" name="PLoS Genet.">
        <title>Life in hot carbon monoxide: the complete genome sequence of Carboxydothermus hydrogenoformans Z-2901.</title>
        <authorList>
            <person name="Wu M."/>
            <person name="Ren Q."/>
            <person name="Durkin A.S."/>
            <person name="Daugherty S.C."/>
            <person name="Brinkac L.M."/>
            <person name="Dodson R.J."/>
            <person name="Madupu R."/>
            <person name="Sullivan S.A."/>
            <person name="Kolonay J.F."/>
            <person name="Nelson W.C."/>
            <person name="Tallon L.J."/>
            <person name="Jones K.M."/>
            <person name="Ulrich L.E."/>
            <person name="Gonzalez J.M."/>
            <person name="Zhulin I.B."/>
            <person name="Robb F.T."/>
            <person name="Eisen J.A."/>
        </authorList>
    </citation>
    <scope>NUCLEOTIDE SEQUENCE [LARGE SCALE GENOMIC DNA]</scope>
    <source>
        <strain>ATCC BAA-161 / DSM 6008 / Z-2901</strain>
    </source>
</reference>
<gene>
    <name evidence="1" type="primary">glmM</name>
    <name type="ordered locus">CHY_2012</name>
</gene>
<name>GLMM_CARHZ</name>
<protein>
    <recommendedName>
        <fullName evidence="1">Phosphoglucosamine mutase</fullName>
        <ecNumber evidence="1">5.4.2.10</ecNumber>
    </recommendedName>
</protein>
<dbReference type="EC" id="5.4.2.10" evidence="1"/>
<dbReference type="EMBL" id="CP000141">
    <property type="protein sequence ID" value="ABB14038.1"/>
    <property type="molecule type" value="Genomic_DNA"/>
</dbReference>
<dbReference type="RefSeq" id="WP_011344904.1">
    <property type="nucleotide sequence ID" value="NC_007503.1"/>
</dbReference>
<dbReference type="SMR" id="Q3AAK3"/>
<dbReference type="FunCoup" id="Q3AAK3">
    <property type="interactions" value="427"/>
</dbReference>
<dbReference type="STRING" id="246194.CHY_2012"/>
<dbReference type="KEGG" id="chy:CHY_2012"/>
<dbReference type="eggNOG" id="COG1109">
    <property type="taxonomic scope" value="Bacteria"/>
</dbReference>
<dbReference type="HOGENOM" id="CLU_016950_7_0_9"/>
<dbReference type="InParanoid" id="Q3AAK3"/>
<dbReference type="OrthoDB" id="9806956at2"/>
<dbReference type="Proteomes" id="UP000002706">
    <property type="component" value="Chromosome"/>
</dbReference>
<dbReference type="GO" id="GO:0005829">
    <property type="term" value="C:cytosol"/>
    <property type="evidence" value="ECO:0007669"/>
    <property type="project" value="TreeGrafter"/>
</dbReference>
<dbReference type="GO" id="GO:0000287">
    <property type="term" value="F:magnesium ion binding"/>
    <property type="evidence" value="ECO:0007669"/>
    <property type="project" value="UniProtKB-UniRule"/>
</dbReference>
<dbReference type="GO" id="GO:0008966">
    <property type="term" value="F:phosphoglucosamine mutase activity"/>
    <property type="evidence" value="ECO:0007669"/>
    <property type="project" value="UniProtKB-UniRule"/>
</dbReference>
<dbReference type="GO" id="GO:0004615">
    <property type="term" value="F:phosphomannomutase activity"/>
    <property type="evidence" value="ECO:0007669"/>
    <property type="project" value="TreeGrafter"/>
</dbReference>
<dbReference type="GO" id="GO:0005975">
    <property type="term" value="P:carbohydrate metabolic process"/>
    <property type="evidence" value="ECO:0007669"/>
    <property type="project" value="InterPro"/>
</dbReference>
<dbReference type="GO" id="GO:0009252">
    <property type="term" value="P:peptidoglycan biosynthetic process"/>
    <property type="evidence" value="ECO:0007669"/>
    <property type="project" value="TreeGrafter"/>
</dbReference>
<dbReference type="GO" id="GO:0006048">
    <property type="term" value="P:UDP-N-acetylglucosamine biosynthetic process"/>
    <property type="evidence" value="ECO:0007669"/>
    <property type="project" value="TreeGrafter"/>
</dbReference>
<dbReference type="CDD" id="cd05802">
    <property type="entry name" value="GlmM"/>
    <property type="match status" value="1"/>
</dbReference>
<dbReference type="FunFam" id="3.30.310.50:FF:000001">
    <property type="entry name" value="Phosphoglucosamine mutase"/>
    <property type="match status" value="1"/>
</dbReference>
<dbReference type="FunFam" id="3.40.120.10:FF:000001">
    <property type="entry name" value="Phosphoglucosamine mutase"/>
    <property type="match status" value="1"/>
</dbReference>
<dbReference type="FunFam" id="3.40.120.10:FF:000002">
    <property type="entry name" value="Phosphoglucosamine mutase"/>
    <property type="match status" value="1"/>
</dbReference>
<dbReference type="Gene3D" id="3.40.120.10">
    <property type="entry name" value="Alpha-D-Glucose-1,6-Bisphosphate, subunit A, domain 3"/>
    <property type="match status" value="3"/>
</dbReference>
<dbReference type="Gene3D" id="3.30.310.50">
    <property type="entry name" value="Alpha-D-phosphohexomutase, C-terminal domain"/>
    <property type="match status" value="1"/>
</dbReference>
<dbReference type="HAMAP" id="MF_01554_B">
    <property type="entry name" value="GlmM_B"/>
    <property type="match status" value="1"/>
</dbReference>
<dbReference type="InterPro" id="IPR005844">
    <property type="entry name" value="A-D-PHexomutase_a/b/a-I"/>
</dbReference>
<dbReference type="InterPro" id="IPR016055">
    <property type="entry name" value="A-D-PHexomutase_a/b/a-I/II/III"/>
</dbReference>
<dbReference type="InterPro" id="IPR005845">
    <property type="entry name" value="A-D-PHexomutase_a/b/a-II"/>
</dbReference>
<dbReference type="InterPro" id="IPR005846">
    <property type="entry name" value="A-D-PHexomutase_a/b/a-III"/>
</dbReference>
<dbReference type="InterPro" id="IPR005843">
    <property type="entry name" value="A-D-PHexomutase_C"/>
</dbReference>
<dbReference type="InterPro" id="IPR036900">
    <property type="entry name" value="A-D-PHexomutase_C_sf"/>
</dbReference>
<dbReference type="InterPro" id="IPR005841">
    <property type="entry name" value="Alpha-D-phosphohexomutase_SF"/>
</dbReference>
<dbReference type="InterPro" id="IPR006352">
    <property type="entry name" value="GlmM_bact"/>
</dbReference>
<dbReference type="InterPro" id="IPR050060">
    <property type="entry name" value="Phosphoglucosamine_mutase"/>
</dbReference>
<dbReference type="NCBIfam" id="TIGR01455">
    <property type="entry name" value="glmM"/>
    <property type="match status" value="1"/>
</dbReference>
<dbReference type="NCBIfam" id="NF008139">
    <property type="entry name" value="PRK10887.1"/>
    <property type="match status" value="1"/>
</dbReference>
<dbReference type="PANTHER" id="PTHR42946:SF1">
    <property type="entry name" value="PHOSPHOGLUCOMUTASE (ALPHA-D-GLUCOSE-1,6-BISPHOSPHATE-DEPENDENT)"/>
    <property type="match status" value="1"/>
</dbReference>
<dbReference type="PANTHER" id="PTHR42946">
    <property type="entry name" value="PHOSPHOHEXOSE MUTASE"/>
    <property type="match status" value="1"/>
</dbReference>
<dbReference type="Pfam" id="PF02878">
    <property type="entry name" value="PGM_PMM_I"/>
    <property type="match status" value="1"/>
</dbReference>
<dbReference type="Pfam" id="PF02879">
    <property type="entry name" value="PGM_PMM_II"/>
    <property type="match status" value="1"/>
</dbReference>
<dbReference type="Pfam" id="PF02880">
    <property type="entry name" value="PGM_PMM_III"/>
    <property type="match status" value="1"/>
</dbReference>
<dbReference type="Pfam" id="PF00408">
    <property type="entry name" value="PGM_PMM_IV"/>
    <property type="match status" value="1"/>
</dbReference>
<dbReference type="PRINTS" id="PR00509">
    <property type="entry name" value="PGMPMM"/>
</dbReference>
<dbReference type="SUPFAM" id="SSF55957">
    <property type="entry name" value="Phosphoglucomutase, C-terminal domain"/>
    <property type="match status" value="1"/>
</dbReference>
<dbReference type="SUPFAM" id="SSF53738">
    <property type="entry name" value="Phosphoglucomutase, first 3 domains"/>
    <property type="match status" value="3"/>
</dbReference>
<proteinExistence type="inferred from homology"/>
<keyword id="KW-0413">Isomerase</keyword>
<keyword id="KW-0460">Magnesium</keyword>
<keyword id="KW-0479">Metal-binding</keyword>
<keyword id="KW-0597">Phosphoprotein</keyword>
<keyword id="KW-1185">Reference proteome</keyword>
<feature type="chain" id="PRO_0000301297" description="Phosphoglucosamine mutase">
    <location>
        <begin position="1"/>
        <end position="443"/>
    </location>
</feature>
<feature type="active site" description="Phosphoserine intermediate" evidence="1">
    <location>
        <position position="100"/>
    </location>
</feature>
<feature type="binding site" description="via phosphate group" evidence="1">
    <location>
        <position position="100"/>
    </location>
    <ligand>
        <name>Mg(2+)</name>
        <dbReference type="ChEBI" id="CHEBI:18420"/>
    </ligand>
</feature>
<feature type="binding site" evidence="1">
    <location>
        <position position="240"/>
    </location>
    <ligand>
        <name>Mg(2+)</name>
        <dbReference type="ChEBI" id="CHEBI:18420"/>
    </ligand>
</feature>
<feature type="binding site" evidence="1">
    <location>
        <position position="242"/>
    </location>
    <ligand>
        <name>Mg(2+)</name>
        <dbReference type="ChEBI" id="CHEBI:18420"/>
    </ligand>
</feature>
<feature type="binding site" evidence="1">
    <location>
        <position position="244"/>
    </location>
    <ligand>
        <name>Mg(2+)</name>
        <dbReference type="ChEBI" id="CHEBI:18420"/>
    </ligand>
</feature>
<feature type="modified residue" description="Phosphoserine" evidence="1">
    <location>
        <position position="100"/>
    </location>
</feature>
<evidence type="ECO:0000255" key="1">
    <source>
        <dbReference type="HAMAP-Rule" id="MF_01554"/>
    </source>
</evidence>
<sequence length="443" mass="47626">MGKLFGTDGVRGVANRDLTPELAYKLGRAAAYVLKKKYNGQGIVVGKDTRISGDMLETALAAGILSVGLNVLRVGVMPTPAIAYLTRELKATAGAVISASHNPMEDNGIKFFSGSGFKLPDEVEEEIEKYVLGEKEIPIRPIGAEIGRVREISDAVLLYKSFAKNTVELPFSGLRVVVDCANGAASYVAPKIYEELGAEVIPIFNTPDGTNINANCGSTHPEALMRAVVEEGAHLGLAHDGDADRVLAVDEKGNLVDGDQIMVIIGKYLKKKGLLKNNRIVVTVMSNLGLKKAFAREGIEVLETKVGDRYVLEEMLKNGAIIGGEQSGHIILLDHNTTGDGIITALQLMQVIVAEGKKLSELAQEMPKFPQVLKNVRVLDKEKIMASEELAKAIARGEKKLGEGRILVRPSGTEPLIRVMAEGADAKLTEEVVDEIIAVIEKL</sequence>
<comment type="function">
    <text evidence="1">Catalyzes the conversion of glucosamine-6-phosphate to glucosamine-1-phosphate.</text>
</comment>
<comment type="catalytic activity">
    <reaction evidence="1">
        <text>alpha-D-glucosamine 1-phosphate = D-glucosamine 6-phosphate</text>
        <dbReference type="Rhea" id="RHEA:23424"/>
        <dbReference type="ChEBI" id="CHEBI:58516"/>
        <dbReference type="ChEBI" id="CHEBI:58725"/>
        <dbReference type="EC" id="5.4.2.10"/>
    </reaction>
</comment>
<comment type="cofactor">
    <cofactor evidence="1">
        <name>Mg(2+)</name>
        <dbReference type="ChEBI" id="CHEBI:18420"/>
    </cofactor>
    <text evidence="1">Binds 1 Mg(2+) ion per subunit.</text>
</comment>
<comment type="PTM">
    <text evidence="1">Activated by phosphorylation.</text>
</comment>
<comment type="similarity">
    <text evidence="1">Belongs to the phosphohexose mutase family.</text>
</comment>